<feature type="chain" id="PRO_1000064868" description="UPF0284 protein Tery_1555">
    <location>
        <begin position="1"/>
        <end position="368"/>
    </location>
</feature>
<name>Y1555_TRIEI</name>
<reference key="1">
    <citation type="journal article" date="2015" name="Proc. Natl. Acad. Sci. U.S.A.">
        <title>Trichodesmium genome maintains abundant, widespread noncoding DNA in situ, despite oligotrophic lifestyle.</title>
        <authorList>
            <person name="Walworth N."/>
            <person name="Pfreundt U."/>
            <person name="Nelson W.C."/>
            <person name="Mincer T."/>
            <person name="Heidelberg J.F."/>
            <person name="Fu F."/>
            <person name="Waterbury J.B."/>
            <person name="Glavina del Rio T."/>
            <person name="Goodwin L."/>
            <person name="Kyrpides N.C."/>
            <person name="Land M.L."/>
            <person name="Woyke T."/>
            <person name="Hutchins D.A."/>
            <person name="Hess W.R."/>
            <person name="Webb E.A."/>
        </authorList>
    </citation>
    <scope>NUCLEOTIDE SEQUENCE [LARGE SCALE GENOMIC DNA]</scope>
    <source>
        <strain>IMS101</strain>
    </source>
</reference>
<proteinExistence type="inferred from homology"/>
<gene>
    <name type="ordered locus">Tery_1555</name>
</gene>
<protein>
    <recommendedName>
        <fullName evidence="1">UPF0284 protein Tery_1555</fullName>
    </recommendedName>
</protein>
<dbReference type="EMBL" id="CP000393">
    <property type="protein sequence ID" value="ABG50835.1"/>
    <property type="molecule type" value="Genomic_DNA"/>
</dbReference>
<dbReference type="RefSeq" id="WP_011611211.1">
    <property type="nucleotide sequence ID" value="NC_008312.1"/>
</dbReference>
<dbReference type="SMR" id="Q115I9"/>
<dbReference type="STRING" id="203124.Tery_1555"/>
<dbReference type="KEGG" id="ter:Tery_1555"/>
<dbReference type="eggNOG" id="COG2038">
    <property type="taxonomic scope" value="Bacteria"/>
</dbReference>
<dbReference type="HOGENOM" id="CLU_053134_0_0_3"/>
<dbReference type="OrthoDB" id="418257at2"/>
<dbReference type="GO" id="GO:0008939">
    <property type="term" value="F:nicotinate-nucleotide-dimethylbenzimidazole phosphoribosyltransferase activity"/>
    <property type="evidence" value="ECO:0007669"/>
    <property type="project" value="InterPro"/>
</dbReference>
<dbReference type="CDD" id="cd02439">
    <property type="entry name" value="DMB-PRT_CobT"/>
    <property type="match status" value="1"/>
</dbReference>
<dbReference type="Gene3D" id="3.40.50.10210">
    <property type="match status" value="1"/>
</dbReference>
<dbReference type="HAMAP" id="MF_01086">
    <property type="entry name" value="UPF0284"/>
    <property type="match status" value="1"/>
</dbReference>
<dbReference type="InterPro" id="IPR003200">
    <property type="entry name" value="Nict_dMeBzImd_PRibTrfase"/>
</dbReference>
<dbReference type="InterPro" id="IPR002805">
    <property type="entry name" value="Nict_dMeBzImd_PRibTrfase_arc"/>
</dbReference>
<dbReference type="InterPro" id="IPR036087">
    <property type="entry name" value="Nict_dMeBzImd_PRibTrfase_sf"/>
</dbReference>
<dbReference type="NCBIfam" id="TIGR00303">
    <property type="entry name" value="nicotinate mononucleotide-dependent phosphoribosyltransferase CobT"/>
    <property type="match status" value="1"/>
</dbReference>
<dbReference type="NCBIfam" id="NF003373">
    <property type="entry name" value="PRK04447.1-6"/>
    <property type="match status" value="1"/>
</dbReference>
<dbReference type="PANTHER" id="PTHR38811">
    <property type="match status" value="1"/>
</dbReference>
<dbReference type="PANTHER" id="PTHR38811:SF1">
    <property type="entry name" value="UPF0284 PROTEIN SLL1500"/>
    <property type="match status" value="1"/>
</dbReference>
<dbReference type="SUPFAM" id="SSF52733">
    <property type="entry name" value="Nicotinate mononucleotide:5,6-dimethylbenzimidazole phosphoribosyltransferase (CobT)"/>
    <property type="match status" value="1"/>
</dbReference>
<sequence length="368" mass="39565">MIRVYTQRQQGKNWLQRYQGYKPIFGCILGFTDTGLIPGISAAGATPQDRQYTCLADIEFLYNGLQLQPQYPLPPLEAGASPVLITKAIIDTLNIPLYLFNAGLYHKPTVPTIDLGGAPARCLTSGHALDLATIQHLLEVGSYWGRKLADEAKDSYVILGECVVGGTTTALAVLLGLGIGAIGKVNSSHPQCNHDQKLAVVHQGLQEAGFHSALPVSEPLKLVAAVGDPMQIVVAGMGMAASLKVGVMLAGGTQMLAVYALMQVLAEKLSLLWRPENIVVGTTRWVAEDPTGDTVGLAQEIGCVPLMATQLHFDESCYPQLQAYERGYVKEGVGCGGCAITAHLYRNWNQTQLLKAVEDLFASFIFLE</sequence>
<accession>Q115I9</accession>
<comment type="similarity">
    <text evidence="1">Belongs to the UPF0284 family.</text>
</comment>
<evidence type="ECO:0000255" key="1">
    <source>
        <dbReference type="HAMAP-Rule" id="MF_01086"/>
    </source>
</evidence>
<organism>
    <name type="scientific">Trichodesmium erythraeum (strain IMS101)</name>
    <dbReference type="NCBI Taxonomy" id="203124"/>
    <lineage>
        <taxon>Bacteria</taxon>
        <taxon>Bacillati</taxon>
        <taxon>Cyanobacteriota</taxon>
        <taxon>Cyanophyceae</taxon>
        <taxon>Oscillatoriophycideae</taxon>
        <taxon>Oscillatoriales</taxon>
        <taxon>Microcoleaceae</taxon>
        <taxon>Trichodesmium</taxon>
    </lineage>
</organism>